<reference evidence="6" key="1">
    <citation type="journal article" date="2010" name="Peptides">
        <title>CAPA-peptides of praying mantids (Mantodea).</title>
        <authorList>
            <person name="Koehler R."/>
            <person name="Predel R."/>
        </authorList>
    </citation>
    <scope>PROTEIN SEQUENCE</scope>
    <scope>MASS SPECTROMETRY</scope>
    <scope>PYROGLUTAMATE FORMATION AT GLN-1</scope>
    <scope>AMIDATION AT VAL-9</scope>
    <source>
        <tissue evidence="4">Abdominal perisympathetic organs</tissue>
    </source>
</reference>
<name>PVK1_CHRSW</name>
<protein>
    <recommendedName>
        <fullName evidence="5">Periviscerokinin-1</fullName>
    </recommendedName>
</protein>
<organism>
    <name type="scientific">Chroicoptera sp. (strain Windhoek)</name>
    <name type="common">Praying mantis</name>
    <dbReference type="NCBI Taxonomy" id="765340"/>
    <lineage>
        <taxon>Eukaryota</taxon>
        <taxon>Metazoa</taxon>
        <taxon>Ecdysozoa</taxon>
        <taxon>Arthropoda</taxon>
        <taxon>Hexapoda</taxon>
        <taxon>Insecta</taxon>
        <taxon>Pterygota</taxon>
        <taxon>Neoptera</taxon>
        <taxon>Polyneoptera</taxon>
        <taxon>Dictyoptera</taxon>
        <taxon>Mantodea</taxon>
        <taxon>Eumantodea</taxon>
        <taxon>Chroicopteroidea</taxon>
        <taxon>Chroicopteridae</taxon>
        <taxon>Chroicopterinae</taxon>
        <taxon>Chroicoptera</taxon>
    </lineage>
</organism>
<accession>P86648</accession>
<sequence length="9" mass="1026">QGLIPFPRV</sequence>
<comment type="function">
    <text evidence="1">Mediates visceral muscle contractile activity (myotropic activity).</text>
</comment>
<comment type="subcellular location">
    <subcellularLocation>
        <location evidence="2">Secreted</location>
    </subcellularLocation>
</comment>
<comment type="mass spectrometry" mass="1025.6" method="MALDI" evidence="4"/>
<comment type="mass spectrometry" mass="1008.6" method="MALDI" evidence="4">
    <text>With pyroglutamate at Gln-1.</text>
</comment>
<comment type="similarity">
    <text evidence="3">Belongs to the periviscerokinin family.</text>
</comment>
<keyword id="KW-0027">Amidation</keyword>
<keyword id="KW-0903">Direct protein sequencing</keyword>
<keyword id="KW-0527">Neuropeptide</keyword>
<keyword id="KW-0873">Pyrrolidone carboxylic acid</keyword>
<keyword id="KW-0964">Secreted</keyword>
<evidence type="ECO:0000250" key="1">
    <source>
        <dbReference type="UniProtKB" id="P83923"/>
    </source>
</evidence>
<evidence type="ECO:0000250" key="2">
    <source>
        <dbReference type="UniProtKB" id="P84375"/>
    </source>
</evidence>
<evidence type="ECO:0000255" key="3"/>
<evidence type="ECO:0000269" key="4">
    <source>
    </source>
</evidence>
<evidence type="ECO:0000303" key="5">
    <source>
    </source>
</evidence>
<evidence type="ECO:0000305" key="6"/>
<dbReference type="GO" id="GO:0005576">
    <property type="term" value="C:extracellular region"/>
    <property type="evidence" value="ECO:0007669"/>
    <property type="project" value="UniProtKB-SubCell"/>
</dbReference>
<dbReference type="GO" id="GO:0007218">
    <property type="term" value="P:neuropeptide signaling pathway"/>
    <property type="evidence" value="ECO:0007669"/>
    <property type="project" value="UniProtKB-KW"/>
</dbReference>
<dbReference type="InterPro" id="IPR013231">
    <property type="entry name" value="Periviscerokinin"/>
</dbReference>
<dbReference type="Pfam" id="PF08259">
    <property type="entry name" value="Periviscerokin"/>
    <property type="match status" value="1"/>
</dbReference>
<feature type="peptide" id="PRO_0000395564" description="Periviscerokinin-1" evidence="4">
    <location>
        <begin position="1"/>
        <end position="9"/>
    </location>
</feature>
<feature type="modified residue" description="Pyrrolidone carboxylic acid; partial" evidence="4">
    <location>
        <position position="1"/>
    </location>
</feature>
<feature type="modified residue" description="Valine amide" evidence="4">
    <location>
        <position position="9"/>
    </location>
</feature>
<feature type="unsure residue" description="L or I" evidence="4">
    <location>
        <position position="3"/>
    </location>
</feature>
<feature type="unsure residue" description="I or L" evidence="4">
    <location>
        <position position="4"/>
    </location>
</feature>
<proteinExistence type="evidence at protein level"/>